<dbReference type="EC" id="7.2.2.7" evidence="1"/>
<dbReference type="EMBL" id="AM040265">
    <property type="protein sequence ID" value="CAJ12687.1"/>
    <property type="molecule type" value="Genomic_DNA"/>
</dbReference>
<dbReference type="RefSeq" id="WP_002965923.1">
    <property type="nucleotide sequence ID" value="NZ_KN046823.1"/>
</dbReference>
<dbReference type="SMR" id="Q2YKX3"/>
<dbReference type="STRING" id="359391.BAB2_0521"/>
<dbReference type="KEGG" id="bmf:BAB2_0521"/>
<dbReference type="PATRIC" id="fig|359391.11.peg.2710"/>
<dbReference type="HOGENOM" id="CLU_000604_1_1_5"/>
<dbReference type="PhylomeDB" id="Q2YKX3"/>
<dbReference type="Proteomes" id="UP000002719">
    <property type="component" value="Chromosome II"/>
</dbReference>
<dbReference type="GO" id="GO:0043190">
    <property type="term" value="C:ATP-binding cassette (ABC) transporter complex"/>
    <property type="evidence" value="ECO:0007669"/>
    <property type="project" value="InterPro"/>
</dbReference>
<dbReference type="GO" id="GO:0015408">
    <property type="term" value="F:ABC-type ferric iron transporter activity"/>
    <property type="evidence" value="ECO:0007669"/>
    <property type="project" value="UniProtKB-EC"/>
</dbReference>
<dbReference type="GO" id="GO:0005524">
    <property type="term" value="F:ATP binding"/>
    <property type="evidence" value="ECO:0007669"/>
    <property type="project" value="UniProtKB-KW"/>
</dbReference>
<dbReference type="GO" id="GO:0016887">
    <property type="term" value="F:ATP hydrolysis activity"/>
    <property type="evidence" value="ECO:0007669"/>
    <property type="project" value="InterPro"/>
</dbReference>
<dbReference type="FunFam" id="3.40.50.300:FF:000425">
    <property type="entry name" value="Probable ABC transporter, ATP-binding subunit"/>
    <property type="match status" value="1"/>
</dbReference>
<dbReference type="Gene3D" id="2.40.50.100">
    <property type="match status" value="1"/>
</dbReference>
<dbReference type="Gene3D" id="3.40.50.300">
    <property type="entry name" value="P-loop containing nucleotide triphosphate hydrolases"/>
    <property type="match status" value="1"/>
</dbReference>
<dbReference type="InterPro" id="IPR003593">
    <property type="entry name" value="AAA+_ATPase"/>
</dbReference>
<dbReference type="InterPro" id="IPR050093">
    <property type="entry name" value="ABC_SmlMolc_Importer"/>
</dbReference>
<dbReference type="InterPro" id="IPR003439">
    <property type="entry name" value="ABC_transporter-like_ATP-bd"/>
</dbReference>
<dbReference type="InterPro" id="IPR017871">
    <property type="entry name" value="ABC_transporter-like_CS"/>
</dbReference>
<dbReference type="InterPro" id="IPR008995">
    <property type="entry name" value="Mo/tungstate-bd_C_term_dom"/>
</dbReference>
<dbReference type="InterPro" id="IPR027417">
    <property type="entry name" value="P-loop_NTPase"/>
</dbReference>
<dbReference type="InterPro" id="IPR013611">
    <property type="entry name" value="Transp-assoc_OB_typ2"/>
</dbReference>
<dbReference type="PANTHER" id="PTHR42781">
    <property type="entry name" value="SPERMIDINE/PUTRESCINE IMPORT ATP-BINDING PROTEIN POTA"/>
    <property type="match status" value="1"/>
</dbReference>
<dbReference type="PANTHER" id="PTHR42781:SF1">
    <property type="entry name" value="THIAMINE IMPORT ATP-BINDING PROTEIN THIQ"/>
    <property type="match status" value="1"/>
</dbReference>
<dbReference type="Pfam" id="PF00005">
    <property type="entry name" value="ABC_tran"/>
    <property type="match status" value="1"/>
</dbReference>
<dbReference type="Pfam" id="PF08402">
    <property type="entry name" value="TOBE_2"/>
    <property type="match status" value="1"/>
</dbReference>
<dbReference type="SMART" id="SM00382">
    <property type="entry name" value="AAA"/>
    <property type="match status" value="1"/>
</dbReference>
<dbReference type="SUPFAM" id="SSF50331">
    <property type="entry name" value="MOP-like"/>
    <property type="match status" value="1"/>
</dbReference>
<dbReference type="SUPFAM" id="SSF52540">
    <property type="entry name" value="P-loop containing nucleoside triphosphate hydrolases"/>
    <property type="match status" value="1"/>
</dbReference>
<dbReference type="PROSITE" id="PS00211">
    <property type="entry name" value="ABC_TRANSPORTER_1"/>
    <property type="match status" value="1"/>
</dbReference>
<dbReference type="PROSITE" id="PS50893">
    <property type="entry name" value="ABC_TRANSPORTER_2"/>
    <property type="match status" value="1"/>
</dbReference>
<dbReference type="PROSITE" id="PS51242">
    <property type="entry name" value="FBPC"/>
    <property type="match status" value="1"/>
</dbReference>
<gene>
    <name evidence="1" type="primary">fbpC</name>
    <name type="ordered locus">BAB2_0521</name>
</gene>
<feature type="chain" id="PRO_0000260193" description="Fe(3+) ions import ATP-binding protein FbpC">
    <location>
        <begin position="1"/>
        <end position="353"/>
    </location>
</feature>
<feature type="domain" description="ABC transporter" evidence="1">
    <location>
        <begin position="9"/>
        <end position="239"/>
    </location>
</feature>
<feature type="binding site" evidence="1">
    <location>
        <begin position="41"/>
        <end position="48"/>
    </location>
    <ligand>
        <name>ATP</name>
        <dbReference type="ChEBI" id="CHEBI:30616"/>
    </ligand>
</feature>
<sequence length="353" mass="37890">MTAIRPGSVTFENVTKKFGNFTALPNLSLTVEPGTLVTLLGPSGCGKTTTLRLLAGLEHPTSGRILIGGKDVTNLPANERDVSMVFQSYALFPHMTSLENVAYGLESSGFKKNEARERAEEGLKLVGLGGMGHRLPAELSGGQQQRVAVARALVLEPQVLLLDEPLSTLDARLRRRVRTEIRELQQRLGFTAVYVTHDQDEALAVSDTIIVMKEGGIAQKGSPRDLYEAPASAFIADFMGEANVVPCEVISAENGEAVIRVAGLTHRVPARNAQPGPAQLAIRPNAVTLQPQAGGGFSGTVAHSAYLGDHIEYEIETEHGKLFIVDPAVEQSLPLQTDVSIQFKTRGLAIINQ</sequence>
<evidence type="ECO:0000255" key="1">
    <source>
        <dbReference type="HAMAP-Rule" id="MF_01706"/>
    </source>
</evidence>
<name>FBPC_BRUA2</name>
<keyword id="KW-0067">ATP-binding</keyword>
<keyword id="KW-0997">Cell inner membrane</keyword>
<keyword id="KW-1003">Cell membrane</keyword>
<keyword id="KW-0406">Ion transport</keyword>
<keyword id="KW-0408">Iron</keyword>
<keyword id="KW-0410">Iron transport</keyword>
<keyword id="KW-0472">Membrane</keyword>
<keyword id="KW-0547">Nucleotide-binding</keyword>
<keyword id="KW-1185">Reference proteome</keyword>
<keyword id="KW-1278">Translocase</keyword>
<keyword id="KW-0813">Transport</keyword>
<reference key="1">
    <citation type="journal article" date="2005" name="Infect. Immun.">
        <title>Whole-genome analyses of speciation events in pathogenic Brucellae.</title>
        <authorList>
            <person name="Chain P.S."/>
            <person name="Comerci D.J."/>
            <person name="Tolmasky M.E."/>
            <person name="Larimer F.W."/>
            <person name="Malfatti S.A."/>
            <person name="Vergez L.M."/>
            <person name="Aguero F."/>
            <person name="Land M.L."/>
            <person name="Ugalde R.A."/>
            <person name="Garcia E."/>
        </authorList>
    </citation>
    <scope>NUCLEOTIDE SEQUENCE [LARGE SCALE GENOMIC DNA]</scope>
    <source>
        <strain>2308</strain>
    </source>
</reference>
<proteinExistence type="inferred from homology"/>
<organism>
    <name type="scientific">Brucella abortus (strain 2308)</name>
    <dbReference type="NCBI Taxonomy" id="359391"/>
    <lineage>
        <taxon>Bacteria</taxon>
        <taxon>Pseudomonadati</taxon>
        <taxon>Pseudomonadota</taxon>
        <taxon>Alphaproteobacteria</taxon>
        <taxon>Hyphomicrobiales</taxon>
        <taxon>Brucellaceae</taxon>
        <taxon>Brucella/Ochrobactrum group</taxon>
        <taxon>Brucella</taxon>
    </lineage>
</organism>
<protein>
    <recommendedName>
        <fullName evidence="1">Fe(3+) ions import ATP-binding protein FbpC</fullName>
        <ecNumber evidence="1">7.2.2.7</ecNumber>
    </recommendedName>
</protein>
<accession>Q2YKX3</accession>
<comment type="function">
    <text evidence="1">Part of the ABC transporter complex FbpABC involved in Fe(3+) ions import. Responsible for energy coupling to the transport system.</text>
</comment>
<comment type="catalytic activity">
    <reaction evidence="1">
        <text>Fe(3+)(out) + ATP + H2O = Fe(3+)(in) + ADP + phosphate + H(+)</text>
        <dbReference type="Rhea" id="RHEA:12332"/>
        <dbReference type="ChEBI" id="CHEBI:15377"/>
        <dbReference type="ChEBI" id="CHEBI:15378"/>
        <dbReference type="ChEBI" id="CHEBI:29034"/>
        <dbReference type="ChEBI" id="CHEBI:30616"/>
        <dbReference type="ChEBI" id="CHEBI:43474"/>
        <dbReference type="ChEBI" id="CHEBI:456216"/>
        <dbReference type="EC" id="7.2.2.7"/>
    </reaction>
</comment>
<comment type="subunit">
    <text evidence="1">The complex is composed of two ATP-binding proteins (FbpC), two transmembrane proteins (FbpB) and a solute-binding protein (FbpA).</text>
</comment>
<comment type="subcellular location">
    <subcellularLocation>
        <location evidence="1">Cell inner membrane</location>
        <topology evidence="1">Peripheral membrane protein</topology>
    </subcellularLocation>
</comment>
<comment type="similarity">
    <text evidence="1">Belongs to the ABC transporter superfamily. Fe(3+) ion importer (TC 3.A.1.10) family.</text>
</comment>